<accession>P9WQ62</accession>
<accession>L0TCD0</accession>
<accession>P71717</accession>
<accession>Q7D788</accession>
<organism>
    <name type="scientific">Mycobacterium tuberculosis (strain CDC 1551 / Oshkosh)</name>
    <dbReference type="NCBI Taxonomy" id="83331"/>
    <lineage>
        <taxon>Bacteria</taxon>
        <taxon>Bacillati</taxon>
        <taxon>Actinomycetota</taxon>
        <taxon>Actinomycetes</taxon>
        <taxon>Mycobacteriales</taxon>
        <taxon>Mycobacteriaceae</taxon>
        <taxon>Mycobacterium</taxon>
        <taxon>Mycobacterium tuberculosis complex</taxon>
    </lineage>
</organism>
<reference key="1">
    <citation type="journal article" date="2002" name="J. Bacteriol.">
        <title>Whole-genome comparison of Mycobacterium tuberculosis clinical and laboratory strains.</title>
        <authorList>
            <person name="Fleischmann R.D."/>
            <person name="Alland D."/>
            <person name="Eisen J.A."/>
            <person name="Carpenter L."/>
            <person name="White O."/>
            <person name="Peterson J.D."/>
            <person name="DeBoy R.T."/>
            <person name="Dodson R.J."/>
            <person name="Gwinn M.L."/>
            <person name="Haft D.H."/>
            <person name="Hickey E.K."/>
            <person name="Kolonay J.F."/>
            <person name="Nelson W.C."/>
            <person name="Umayam L.A."/>
            <person name="Ermolaeva M.D."/>
            <person name="Salzberg S.L."/>
            <person name="Delcher A."/>
            <person name="Utterback T.R."/>
            <person name="Weidman J.F."/>
            <person name="Khouri H.M."/>
            <person name="Gill J."/>
            <person name="Mikula A."/>
            <person name="Bishai W."/>
            <person name="Jacobs W.R. Jr."/>
            <person name="Venter J.C."/>
            <person name="Fraser C.M."/>
        </authorList>
    </citation>
    <scope>NUCLEOTIDE SEQUENCE [LARGE SCALE GENOMIC DNA]</scope>
    <source>
        <strain>CDC 1551 / Oshkosh</strain>
    </source>
</reference>
<reference key="2">
    <citation type="journal article" date="1998" name="Chem. Biol.">
        <title>Identification of a Mycobacterium tuberculosis gene cluster encoding the biosynthetic enzymes for assembly of the virulence-conferring siderophore mycobactin.</title>
        <authorList>
            <person name="Quadri L.E.N."/>
            <person name="Sello J."/>
            <person name="Keating T.A."/>
            <person name="Weinreb P.H."/>
            <person name="Walsh C.T."/>
        </authorList>
    </citation>
    <scope>FUNCTION</scope>
    <scope>DOMAIN</scope>
    <scope>PHOSPHOPANTETHEINYLATION AT SER-39 AND SER-1094</scope>
    <source>
        <strain>CDC 1551 / Oshkosh</strain>
    </source>
</reference>
<evidence type="ECO:0000250" key="1"/>
<evidence type="ECO:0000255" key="2">
    <source>
        <dbReference type="PROSITE-ProRule" id="PRU00258"/>
    </source>
</evidence>
<evidence type="ECO:0000269" key="3">
    <source>
    </source>
</evidence>
<evidence type="ECO:0000305" key="4"/>
<evidence type="ECO:0000305" key="5">
    <source>
    </source>
</evidence>
<name>MBTB_MYCTO</name>
<sequence>MVHATACSEIIRAEVAELLGVRADALHPGANLVGQGLDSIRMMSLVGRWRRKGIAVDFATLAATPTIEAWSQLVSAGTGVAPTAVAAPGDAGLSQEGEPFPVAPMQHAMWVGRHDHQQLGGVAGHLYVEFDGARVDPDRLRAAATRLALRHPMLRVQFLPDGTQRIPPAAGSRDFPISVADLRHVAPDVVDQRLAGIRDAKSHQQLDGAVFELALTLLPGERTRLHVDLDMQAADAMSYRILLADLAALYDGREPPALGYTYREYRQAIEAEETLPQPVRDADRDWWAQRIPQLPDPPALPTRAGGERDRRRSTRRWHWLDPQTRDALFARARARGITPAMTLAAAFANVLARWSASSRFLLNLPLFSRQALHPDVDLLVGDFTSSLLLDVDLTGARTAAARAQAVQEALRTAAGHSAYPGLSVLRDLSRHRGTQVLAPVVFTSALGLGDLFCPDVTEQFGTPGWIISQGPQVLLDAQVTEFDGGVLVNWDVREGVFAPGVIDAMFTHQVDELLRLAAGDDAWDAPSPSALPAAQRAVRAALNGRTAAPSTEALHDGFFRQAQQQPDAPAVFASSGDLSYAQLRDQASAVAAALRAAGLRVGDTVAVLGPKTGEQVAAVLGILAAGGVYLPIGVDQPRDRAERILATGSVNLALVCGPPCQVRVPVPTLLLADVLAAAPAEFVPGPSDPTALAYVLFTSGSTGEPKGVEVAHDAAMNTVETFIRHFELGAADRWLALATLECDMSVLDIFAALRSGGAIVVVDEAQRRDPDAWARLIDTYEVTALNFMPGWLDMLLEVGGGRLSSLRAVAVGGDWVRPDLARRLQVQAPSARFAGLGGATETAVHATIFEVQDAANLPPDWASVPYGVPFPNNACRVVADSGDDCPDWVAGELWVSGRGIARGYRGRPELTAERFVEHDGRTWYRTGDLARYWHDGTLEFVGRADHRVKISGYRVELGEIEAALQRLPGVHAAAATVLPGGSDVLAAAVCVDDAGVTAESIRQQLADLVPAHMIPRHVTLLDRIPFTDSGKIDRAEVGALLAAEVERSGDRSAPYAAPRTVLQRALRRIVADILGRANDAVGVHDDFFALGGDSVLATQVVAGIRRWLDSPSLMVADMFAARTIAALAQLLTGREANADRLELVAEVYLEIANMTSADVMAALDPIEQPAQPAFKPWVKRFTGTDKPGAVLVFPHAGGAAAAYRWLAKSLVANDVDTFVVQYPQRADRRSHPAADSIEALALELFEAGDWHLTAPLTLFGHCMGAIVAFEFARLAERNGVPVRALWASSGQAPSTVAASGPLPTADRDVLADMVDLGGTDPVLLEDEEFVELLVPAVKADYRALSGYSCPPDVRIRANIHAVGGNRDHRISREMLTSWETHTSGRFTLSHFDGGHFYLNDHLDAVARMVSADVR</sequence>
<proteinExistence type="evidence at protein level"/>
<protein>
    <recommendedName>
        <fullName>Phenyloxazoline synthase MbtB</fullName>
        <ecNumber>6.3.2.-</ecNumber>
    </recommendedName>
    <alternativeName>
        <fullName>Mycobactin synthetase protein B</fullName>
    </alternativeName>
</protein>
<feature type="chain" id="PRO_0000426831" description="Phenyloxazoline synthase MbtB">
    <location>
        <begin position="1"/>
        <end position="1414"/>
    </location>
</feature>
<feature type="domain" description="Carrier 1" evidence="2">
    <location>
        <begin position="5"/>
        <end position="78"/>
    </location>
</feature>
<feature type="domain" description="Carrier 2" evidence="2">
    <location>
        <begin position="1057"/>
        <end position="1135"/>
    </location>
</feature>
<feature type="region of interest" description="Condensation/cyclization">
    <location>
        <begin position="96"/>
        <end position="394"/>
    </location>
</feature>
<feature type="region of interest" description="Adenylation">
    <location>
        <begin position="579"/>
        <end position="975"/>
    </location>
</feature>
<feature type="region of interest" description="Thioesterase">
    <location>
        <begin position="1188"/>
        <end position="1413"/>
    </location>
</feature>
<feature type="modified residue" description="O-(pantetheine 4'-phosphoryl)serine" evidence="2 5">
    <location>
        <position position="39"/>
    </location>
</feature>
<feature type="modified residue" description="O-(pantetheine 4'-phosphoryl)serine" evidence="2 5">
    <location>
        <position position="1094"/>
    </location>
</feature>
<gene>
    <name type="primary">mbtB</name>
    <name type="ordered locus">MT2451</name>
</gene>
<keyword id="KW-0436">Ligase</keyword>
<keyword id="KW-0511">Multifunctional enzyme</keyword>
<keyword id="KW-0596">Phosphopantetheine</keyword>
<keyword id="KW-0597">Phosphoprotein</keyword>
<keyword id="KW-1185">Reference proteome</keyword>
<keyword id="KW-0677">Repeat</keyword>
<comment type="function">
    <text evidence="3">Involved in the initial steps of the mycobactin biosynthetic pathway. Putatively couples activated salicylic acid with serine or threonine and cyclizes this precursor to the hydroxyphenyloxazoline ring system present in this class of siderophores. Essential for growth in macrophages.</text>
</comment>
<comment type="cofactor">
    <cofactor evidence="1">
        <name>pantetheine 4'-phosphate</name>
        <dbReference type="ChEBI" id="CHEBI:47942"/>
    </cofactor>
    <text evidence="1">Binds 2 phosphopantetheines covalently.</text>
</comment>
<comment type="pathway">
    <text>Siderophore biosynthesis; mycobactin biosynthesis.</text>
</comment>
<comment type="domain">
    <text evidence="3">Modular protein that contains an aryl carrier protein (ArCP) domain which bears a phosphopantetheinyl arm to attach the activated salicylic acid, a condensation/cyclization domain involved in the formation of the oxazoline ring, an adenylation domain which activates the serine or threonine residue into an aminoacyl-AMP ester, a peptidyl carrier protein (PCP) domain which bears a phosphopantetheinyl arm to attach the activated serine or threonine, and a terminal thioesterase domain which assists in the transfer of intermediates from MbtB to ACP1 in MbtD.</text>
</comment>
<comment type="PTM">
    <text>4'-phosphopantetheine is transferred from CoA to a specific serine in each of the two carrier protein domains, leading to their activation from apo to holo forms.</text>
</comment>
<comment type="similarity">
    <text evidence="4">Belongs to the ATP-dependent AMP-binding enzyme family. MbtB subfamily.</text>
</comment>
<dbReference type="EC" id="6.3.2.-"/>
<dbReference type="EMBL" id="AE000516">
    <property type="protein sequence ID" value="AAK46746.1"/>
    <property type="molecule type" value="Genomic_DNA"/>
</dbReference>
<dbReference type="PIR" id="B70674">
    <property type="entry name" value="B70674"/>
</dbReference>
<dbReference type="RefSeq" id="WP_010924520.1">
    <property type="nucleotide sequence ID" value="NC_002755.2"/>
</dbReference>
<dbReference type="SMR" id="P9WQ62"/>
<dbReference type="ESTHER" id="myctu-MBTB">
    <property type="family name" value="Thioesterase"/>
</dbReference>
<dbReference type="KEGG" id="mtc:MT2451"/>
<dbReference type="HOGENOM" id="CLU_000022_2_4_11"/>
<dbReference type="UniPathway" id="UPA00011"/>
<dbReference type="Proteomes" id="UP000001020">
    <property type="component" value="Chromosome"/>
</dbReference>
<dbReference type="GO" id="GO:0005737">
    <property type="term" value="C:cytoplasm"/>
    <property type="evidence" value="ECO:0007669"/>
    <property type="project" value="TreeGrafter"/>
</dbReference>
<dbReference type="GO" id="GO:0000036">
    <property type="term" value="F:acyl carrier activity"/>
    <property type="evidence" value="ECO:0007669"/>
    <property type="project" value="TreeGrafter"/>
</dbReference>
<dbReference type="GO" id="GO:0016874">
    <property type="term" value="F:ligase activity"/>
    <property type="evidence" value="ECO:0007669"/>
    <property type="project" value="UniProtKB-KW"/>
</dbReference>
<dbReference type="GO" id="GO:0031177">
    <property type="term" value="F:phosphopantetheine binding"/>
    <property type="evidence" value="ECO:0007669"/>
    <property type="project" value="InterPro"/>
</dbReference>
<dbReference type="GO" id="GO:0043041">
    <property type="term" value="P:amino acid activation for nonribosomal peptide biosynthetic process"/>
    <property type="evidence" value="ECO:0007669"/>
    <property type="project" value="TreeGrafter"/>
</dbReference>
<dbReference type="GO" id="GO:0044550">
    <property type="term" value="P:secondary metabolite biosynthetic process"/>
    <property type="evidence" value="ECO:0007669"/>
    <property type="project" value="TreeGrafter"/>
</dbReference>
<dbReference type="CDD" id="cd12114">
    <property type="entry name" value="A_NRPS_TlmIV_like"/>
    <property type="match status" value="1"/>
</dbReference>
<dbReference type="CDD" id="cd19535">
    <property type="entry name" value="Cyc_NRPS"/>
    <property type="match status" value="1"/>
</dbReference>
<dbReference type="FunFam" id="1.10.1200.10:FF:000016">
    <property type="entry name" value="Non-ribosomal peptide synthase"/>
    <property type="match status" value="1"/>
</dbReference>
<dbReference type="FunFam" id="3.30.559.10:FF:000023">
    <property type="entry name" value="Non-ribosomal peptide synthetase"/>
    <property type="match status" value="1"/>
</dbReference>
<dbReference type="FunFam" id="3.40.50.12780:FF:000012">
    <property type="entry name" value="Non-ribosomal peptide synthetase"/>
    <property type="match status" value="1"/>
</dbReference>
<dbReference type="FunFam" id="3.40.50.1820:FF:000366">
    <property type="entry name" value="Phenyloxazoline synthase MbtB"/>
    <property type="match status" value="1"/>
</dbReference>
<dbReference type="FunFam" id="3.30.559.30:FF:000006">
    <property type="entry name" value="Yersiniabactin polyketide/non-ribosomal peptide synthetase"/>
    <property type="match status" value="1"/>
</dbReference>
<dbReference type="Gene3D" id="3.30.300.30">
    <property type="match status" value="1"/>
</dbReference>
<dbReference type="Gene3D" id="1.10.1200.10">
    <property type="entry name" value="ACP-like"/>
    <property type="match status" value="2"/>
</dbReference>
<dbReference type="Gene3D" id="3.40.50.1820">
    <property type="entry name" value="alpha/beta hydrolase"/>
    <property type="match status" value="1"/>
</dbReference>
<dbReference type="Gene3D" id="3.30.559.10">
    <property type="entry name" value="Chloramphenicol acetyltransferase-like domain"/>
    <property type="match status" value="1"/>
</dbReference>
<dbReference type="Gene3D" id="3.40.50.12780">
    <property type="entry name" value="N-terminal domain of ligase-like"/>
    <property type="match status" value="1"/>
</dbReference>
<dbReference type="Gene3D" id="3.30.559.30">
    <property type="entry name" value="Nonribosomal peptide synthetase, condensation domain"/>
    <property type="match status" value="1"/>
</dbReference>
<dbReference type="InterPro" id="IPR010071">
    <property type="entry name" value="AA_adenyl_dom"/>
</dbReference>
<dbReference type="InterPro" id="IPR029058">
    <property type="entry name" value="AB_hydrolase_fold"/>
</dbReference>
<dbReference type="InterPro" id="IPR036736">
    <property type="entry name" value="ACP-like_sf"/>
</dbReference>
<dbReference type="InterPro" id="IPR025110">
    <property type="entry name" value="AMP-bd_C"/>
</dbReference>
<dbReference type="InterPro" id="IPR045851">
    <property type="entry name" value="AMP-bd_C_sf"/>
</dbReference>
<dbReference type="InterPro" id="IPR020845">
    <property type="entry name" value="AMP-binding_CS"/>
</dbReference>
<dbReference type="InterPro" id="IPR000873">
    <property type="entry name" value="AMP-dep_synth/lig_dom"/>
</dbReference>
<dbReference type="InterPro" id="IPR042099">
    <property type="entry name" value="ANL_N_sf"/>
</dbReference>
<dbReference type="InterPro" id="IPR023213">
    <property type="entry name" value="CAT-like_dom_sf"/>
</dbReference>
<dbReference type="InterPro" id="IPR001242">
    <property type="entry name" value="Condensatn"/>
</dbReference>
<dbReference type="InterPro" id="IPR020806">
    <property type="entry name" value="PKS_PP-bd"/>
</dbReference>
<dbReference type="InterPro" id="IPR009081">
    <property type="entry name" value="PP-bd_ACP"/>
</dbReference>
<dbReference type="InterPro" id="IPR006162">
    <property type="entry name" value="Ppantetheine_attach_site"/>
</dbReference>
<dbReference type="InterPro" id="IPR001031">
    <property type="entry name" value="Thioesterase"/>
</dbReference>
<dbReference type="NCBIfam" id="TIGR01733">
    <property type="entry name" value="AA-adenyl-dom"/>
    <property type="match status" value="1"/>
</dbReference>
<dbReference type="PANTHER" id="PTHR45527">
    <property type="entry name" value="NONRIBOSOMAL PEPTIDE SYNTHETASE"/>
    <property type="match status" value="1"/>
</dbReference>
<dbReference type="PANTHER" id="PTHR45527:SF10">
    <property type="entry name" value="PYOCHELIN SYNTHASE PCHF"/>
    <property type="match status" value="1"/>
</dbReference>
<dbReference type="Pfam" id="PF00501">
    <property type="entry name" value="AMP-binding"/>
    <property type="match status" value="1"/>
</dbReference>
<dbReference type="Pfam" id="PF13193">
    <property type="entry name" value="AMP-binding_C"/>
    <property type="match status" value="1"/>
</dbReference>
<dbReference type="Pfam" id="PF00668">
    <property type="entry name" value="Condensation"/>
    <property type="match status" value="1"/>
</dbReference>
<dbReference type="Pfam" id="PF00550">
    <property type="entry name" value="PP-binding"/>
    <property type="match status" value="2"/>
</dbReference>
<dbReference type="Pfam" id="PF00975">
    <property type="entry name" value="Thioesterase"/>
    <property type="match status" value="1"/>
</dbReference>
<dbReference type="SMART" id="SM00823">
    <property type="entry name" value="PKS_PP"/>
    <property type="match status" value="2"/>
</dbReference>
<dbReference type="SUPFAM" id="SSF56801">
    <property type="entry name" value="Acetyl-CoA synthetase-like"/>
    <property type="match status" value="1"/>
</dbReference>
<dbReference type="SUPFAM" id="SSF47336">
    <property type="entry name" value="ACP-like"/>
    <property type="match status" value="2"/>
</dbReference>
<dbReference type="SUPFAM" id="SSF53474">
    <property type="entry name" value="alpha/beta-Hydrolases"/>
    <property type="match status" value="1"/>
</dbReference>
<dbReference type="SUPFAM" id="SSF52777">
    <property type="entry name" value="CoA-dependent acyltransferases"/>
    <property type="match status" value="2"/>
</dbReference>
<dbReference type="PROSITE" id="PS00455">
    <property type="entry name" value="AMP_BINDING"/>
    <property type="match status" value="1"/>
</dbReference>
<dbReference type="PROSITE" id="PS50075">
    <property type="entry name" value="CARRIER"/>
    <property type="match status" value="2"/>
</dbReference>
<dbReference type="PROSITE" id="PS00012">
    <property type="entry name" value="PHOSPHOPANTETHEINE"/>
    <property type="match status" value="1"/>
</dbReference>